<name>IF4EA_DANRE</name>
<gene>
    <name evidence="8" type="primary">eif4ea</name>
</gene>
<keyword id="KW-0963">Cytoplasm</keyword>
<keyword id="KW-0396">Initiation factor</keyword>
<keyword id="KW-0509">mRNA transport</keyword>
<keyword id="KW-0539">Nucleus</keyword>
<keyword id="KW-0648">Protein biosynthesis</keyword>
<keyword id="KW-1185">Reference proteome</keyword>
<keyword id="KW-0694">RNA-binding</keyword>
<keyword id="KW-0810">Translation regulation</keyword>
<keyword id="KW-0813">Transport</keyword>
<protein>
    <recommendedName>
        <fullName>Eukaryotic translation initiation factor 4E-1A</fullName>
        <shortName>eIF4E-1A</shortName>
    </recommendedName>
    <alternativeName>
        <fullName>mRNA cap-binding protein</fullName>
    </alternativeName>
</protein>
<accession>Q9DFS6</accession>
<proteinExistence type="evidence at protein level"/>
<organism>
    <name type="scientific">Danio rerio</name>
    <name type="common">Zebrafish</name>
    <name type="synonym">Brachydanio rerio</name>
    <dbReference type="NCBI Taxonomy" id="7955"/>
    <lineage>
        <taxon>Eukaryota</taxon>
        <taxon>Metazoa</taxon>
        <taxon>Chordata</taxon>
        <taxon>Craniata</taxon>
        <taxon>Vertebrata</taxon>
        <taxon>Euteleostomi</taxon>
        <taxon>Actinopterygii</taxon>
        <taxon>Neopterygii</taxon>
        <taxon>Teleostei</taxon>
        <taxon>Ostariophysi</taxon>
        <taxon>Cypriniformes</taxon>
        <taxon>Danionidae</taxon>
        <taxon>Danioninae</taxon>
        <taxon>Danio</taxon>
    </lineage>
</organism>
<reference evidence="6" key="1">
    <citation type="journal article" date="2004" name="J. Biol. Chem.">
        <title>Two zebrafish eIF4E family members are differentially expressed and functionally divergent.</title>
        <authorList>
            <person name="Robalino J."/>
            <person name="Joshi B."/>
            <person name="Fahrenkrug S.C."/>
            <person name="Jagus R."/>
        </authorList>
    </citation>
    <scope>NUCLEOTIDE SEQUENCE [MRNA]</scope>
    <scope>FUNCTION</scope>
    <scope>INTERACTION WITH EIF4EBP3L</scope>
    <scope>SUBCELLULAR LOCATION</scope>
    <scope>TISSUE SPECIFICITY</scope>
    <scope>DEVELOPMENTAL STAGE</scope>
</reference>
<reference evidence="7" key="2">
    <citation type="submission" date="2004-06" db="EMBL/GenBank/DDBJ databases">
        <authorList>
            <consortium name="NIH - Zebrafish Gene Collection (ZGC) project"/>
        </authorList>
    </citation>
    <scope>NUCLEOTIDE SEQUENCE [LARGE SCALE MRNA]</scope>
    <source>
        <tissue evidence="7">Embryo</tissue>
    </source>
</reference>
<sequence length="215" mass="24850">MATAEPETSTNPSNSEEKNEENEQQIVSLEDYIKHPLQNRWALWFFKNDKSKTWQANLRLISKFDTVEDFWALYNHIQLSSNLMSGCDYSLFKDGIEPMWEDERNKRGGRWLITLSKQQRRADLDRFWLETLLCLVGEAFDDHSDDVCGAVVNIRTKGDKIAIWTTDYENKDAIVHIGRVYKERLGVPPKVIIGYQSHADTATKSGSTTKNKFVV</sequence>
<evidence type="ECO:0000250" key="1">
    <source>
        <dbReference type="UniProtKB" id="P06730"/>
    </source>
</evidence>
<evidence type="ECO:0000250" key="2">
    <source>
        <dbReference type="UniProtKB" id="P63073"/>
    </source>
</evidence>
<evidence type="ECO:0000255" key="3"/>
<evidence type="ECO:0000256" key="4">
    <source>
        <dbReference type="SAM" id="MobiDB-lite"/>
    </source>
</evidence>
<evidence type="ECO:0000269" key="5">
    <source>
    </source>
</evidence>
<evidence type="ECO:0000312" key="6">
    <source>
        <dbReference type="EMBL" id="AAG09794.1"/>
    </source>
</evidence>
<evidence type="ECO:0000312" key="7">
    <source>
        <dbReference type="EMBL" id="AAH71364.1"/>
    </source>
</evidence>
<evidence type="ECO:0000312" key="8">
    <source>
        <dbReference type="ZFIN" id="ZDB-GENE-040413-1"/>
    </source>
</evidence>
<dbReference type="EMBL" id="AF257519">
    <property type="protein sequence ID" value="AAG09794.1"/>
    <property type="molecule type" value="mRNA"/>
</dbReference>
<dbReference type="EMBL" id="BC071364">
    <property type="protein sequence ID" value="AAH71364.1"/>
    <property type="molecule type" value="mRNA"/>
</dbReference>
<dbReference type="RefSeq" id="NP_571808.1">
    <property type="nucleotide sequence ID" value="NM_131733.1"/>
</dbReference>
<dbReference type="SMR" id="Q9DFS6"/>
<dbReference type="FunCoup" id="Q9DFS6">
    <property type="interactions" value="2114"/>
</dbReference>
<dbReference type="STRING" id="7955.ENSDARP00000103599"/>
<dbReference type="PaxDb" id="7955-ENSDARP00000103599"/>
<dbReference type="Ensembl" id="ENSDART00000183348">
    <property type="protein sequence ID" value="ENSDARP00000156965"/>
    <property type="gene ID" value="ENSDARG00000115520"/>
</dbReference>
<dbReference type="GeneID" id="79380"/>
<dbReference type="KEGG" id="dre:79380"/>
<dbReference type="AGR" id="ZFIN:ZDB-GENE-040413-1"/>
<dbReference type="CTD" id="79380"/>
<dbReference type="ZFIN" id="ZDB-GENE-040413-1">
    <property type="gene designation" value="eif4ea"/>
</dbReference>
<dbReference type="eggNOG" id="KOG1670">
    <property type="taxonomic scope" value="Eukaryota"/>
</dbReference>
<dbReference type="InParanoid" id="Q9DFS6"/>
<dbReference type="OMA" id="CTKEKRI"/>
<dbReference type="OrthoDB" id="590761at2759"/>
<dbReference type="PhylomeDB" id="Q9DFS6"/>
<dbReference type="Reactome" id="R-DRE-1169408">
    <property type="pathway name" value="ISG15 antiviral mechanism"/>
</dbReference>
<dbReference type="Reactome" id="R-DRE-156827">
    <property type="pathway name" value="L13a-mediated translational silencing of Ceruloplasmin expression"/>
</dbReference>
<dbReference type="Reactome" id="R-DRE-166208">
    <property type="pathway name" value="mTORC1-mediated signalling"/>
</dbReference>
<dbReference type="Reactome" id="R-DRE-72662">
    <property type="pathway name" value="Activation of the mRNA upon binding of the cap-binding complex and eIFs, and subsequent binding to 43S"/>
</dbReference>
<dbReference type="Reactome" id="R-DRE-72702">
    <property type="pathway name" value="Ribosomal scanning and start codon recognition"/>
</dbReference>
<dbReference type="PRO" id="PR:Q9DFS6"/>
<dbReference type="Proteomes" id="UP000000437">
    <property type="component" value="Alternate scaffold 14"/>
</dbReference>
<dbReference type="Proteomes" id="UP000000437">
    <property type="component" value="Chromosome 14"/>
</dbReference>
<dbReference type="GO" id="GO:0005737">
    <property type="term" value="C:cytoplasm"/>
    <property type="evidence" value="ECO:0000314"/>
    <property type="project" value="UniProtKB"/>
</dbReference>
<dbReference type="GO" id="GO:0016281">
    <property type="term" value="C:eukaryotic translation initiation factor 4F complex"/>
    <property type="evidence" value="ECO:0000250"/>
    <property type="project" value="UniProtKB"/>
</dbReference>
<dbReference type="GO" id="GO:0016607">
    <property type="term" value="C:nuclear speck"/>
    <property type="evidence" value="ECO:0000250"/>
    <property type="project" value="UniProtKB"/>
</dbReference>
<dbReference type="GO" id="GO:0005634">
    <property type="term" value="C:nucleus"/>
    <property type="evidence" value="ECO:0000314"/>
    <property type="project" value="UniProtKB"/>
</dbReference>
<dbReference type="GO" id="GO:0000340">
    <property type="term" value="F:RNA 7-methylguanosine cap binding"/>
    <property type="evidence" value="ECO:0000314"/>
    <property type="project" value="UniProtKB"/>
</dbReference>
<dbReference type="GO" id="GO:0003743">
    <property type="term" value="F:translation initiation factor activity"/>
    <property type="evidence" value="ECO:0000314"/>
    <property type="project" value="ZFIN"/>
</dbReference>
<dbReference type="GO" id="GO:0006406">
    <property type="term" value="P:mRNA export from nucleus"/>
    <property type="evidence" value="ECO:0000250"/>
    <property type="project" value="UniProtKB"/>
</dbReference>
<dbReference type="GO" id="GO:0006417">
    <property type="term" value="P:regulation of translation"/>
    <property type="evidence" value="ECO:0000250"/>
    <property type="project" value="UniProtKB"/>
</dbReference>
<dbReference type="GO" id="GO:0006413">
    <property type="term" value="P:translational initiation"/>
    <property type="evidence" value="ECO:0000314"/>
    <property type="project" value="ZFIN"/>
</dbReference>
<dbReference type="FunFam" id="3.30.760.10:FF:000002">
    <property type="entry name" value="Eukaryotic translation initiation factor 4E"/>
    <property type="match status" value="1"/>
</dbReference>
<dbReference type="Gene3D" id="3.30.760.10">
    <property type="entry name" value="RNA Cap, Translation Initiation Factor Eif4e"/>
    <property type="match status" value="1"/>
</dbReference>
<dbReference type="InterPro" id="IPR023398">
    <property type="entry name" value="TIF_eIF4e-like"/>
</dbReference>
<dbReference type="InterPro" id="IPR001040">
    <property type="entry name" value="TIF_eIF_4E"/>
</dbReference>
<dbReference type="InterPro" id="IPR019770">
    <property type="entry name" value="TIF_eIF_4E_CS"/>
</dbReference>
<dbReference type="PANTHER" id="PTHR11960">
    <property type="entry name" value="EUKARYOTIC TRANSLATION INITIATION FACTOR 4E RELATED"/>
    <property type="match status" value="1"/>
</dbReference>
<dbReference type="PANTHER" id="PTHR11960:SF74">
    <property type="entry name" value="EUKARYOTIC TRANSLATION INITIATION FACTOR 4E-RELATED"/>
    <property type="match status" value="1"/>
</dbReference>
<dbReference type="Pfam" id="PF01652">
    <property type="entry name" value="IF4E"/>
    <property type="match status" value="1"/>
</dbReference>
<dbReference type="SUPFAM" id="SSF55418">
    <property type="entry name" value="eIF4e-like"/>
    <property type="match status" value="1"/>
</dbReference>
<dbReference type="PROSITE" id="PS00813">
    <property type="entry name" value="IF4E"/>
    <property type="match status" value="1"/>
</dbReference>
<comment type="function">
    <text evidence="2 5">Recognizes and binds the 7-methylguanosine (m7G)-containing mRNA cap during an early step in the initiation of protein synthesis and facilitates ribosome binding by inducing the unwinding of the mRNAs secondary structures (PubMed:14701818). Also promotes export of a subset of mRNAs from the nucleus to the cytoplasm (By similarity).</text>
</comment>
<comment type="subunit">
    <text evidence="5">Interacts with eif4ebp3l.</text>
</comment>
<comment type="subcellular location">
    <subcellularLocation>
        <location evidence="5">Cytoplasm</location>
    </subcellularLocation>
    <subcellularLocation>
        <location evidence="5">Nucleus</location>
    </subcellularLocation>
</comment>
<comment type="tissue specificity">
    <text evidence="5">Expressed in all tissues examined, including gill, fin, heart, intestine, muscle, ovary and testis.</text>
</comment>
<comment type="developmental stage">
    <text evidence="5">Expressed both maternally and zygotically. Zygotic expression persists into the pharyngula stage.</text>
</comment>
<comment type="similarity">
    <text evidence="3">Belongs to the eukaryotic initiation factor 4E family.</text>
</comment>
<feature type="chain" id="PRO_0000193638" description="Eukaryotic translation initiation factor 4E-1A">
    <location>
        <begin position="1"/>
        <end position="215"/>
    </location>
</feature>
<feature type="region of interest" description="Disordered" evidence="4">
    <location>
        <begin position="1"/>
        <end position="23"/>
    </location>
</feature>
<feature type="compositionally biased region" description="Low complexity" evidence="4">
    <location>
        <begin position="1"/>
        <end position="14"/>
    </location>
</feature>
<feature type="binding site" evidence="1">
    <location>
        <begin position="54"/>
        <end position="55"/>
    </location>
    <ligand>
        <name>mRNA</name>
        <dbReference type="ChEBI" id="CHEBI:33699"/>
    </ligand>
    <ligandPart>
        <name>N(7)-methylguanosine 5'-triphosphate group</name>
        <dbReference type="ChEBI" id="CHEBI:74429"/>
        <note>m7GTP residue in mRNA cap</note>
    </ligandPart>
</feature>
<feature type="binding site" evidence="1">
    <location>
        <begin position="100"/>
        <end position="101"/>
    </location>
    <ligand>
        <name>mRNA</name>
        <dbReference type="ChEBI" id="CHEBI:33699"/>
    </ligand>
    <ligandPart>
        <name>N(7)-methylguanosine 5'-triphosphate group</name>
        <dbReference type="ChEBI" id="CHEBI:74429"/>
        <note>m7GTP residue in mRNA cap</note>
    </ligandPart>
</feature>
<feature type="binding site" evidence="1">
    <location>
        <begin position="155"/>
        <end position="160"/>
    </location>
    <ligand>
        <name>mRNA</name>
        <dbReference type="ChEBI" id="CHEBI:33699"/>
    </ligand>
    <ligandPart>
        <name>N(7)-methylguanosine 5'-triphosphate group</name>
        <dbReference type="ChEBI" id="CHEBI:74429"/>
        <note>m7GTP residue in mRNA cap</note>
    </ligandPart>
</feature>
<feature type="binding site" evidence="1">
    <location>
        <begin position="203"/>
        <end position="205"/>
    </location>
    <ligand>
        <name>mRNA</name>
        <dbReference type="ChEBI" id="CHEBI:33699"/>
    </ligand>
    <ligandPart>
        <name>N(7)-methylguanosine 5'-triphosphate group</name>
        <dbReference type="ChEBI" id="CHEBI:74429"/>
        <note>m7GTP residue in mRNA cap</note>
    </ligandPart>
</feature>